<accession>Q6YZW2</accession>
<accession>A0A0P0XI52</accession>
<name>RB208_ORYSJ</name>
<sequence>MNGAGGNHQQQQQQQQRLRQQQQQQALLMQQALQQQQQYQSGVLAAAAAAAMTQMEPISNGNLPPGFDPSTCRSVYVGNVHPNVTESLLIEVFQSSGLVERCKLIRKEKSSFGFVDYYDRRSAALAIMTLHGRHICGQAIKVNWAYASTQREDTSGHFHIFVGDLSSEVNDATLYACFSAYPSCSDARVMWDNKTGRSRGYGFVSFRNQQEAETAITEMTGKWLGSRQIRCNWATKNNAEEKQETDNHNAVVLTNGSSSNPGMEASQDTGSKENPENNPDCTTVYVGNLGHEVNRDELHRHFYNLGVGAIEEVRVQQDKGFGFVRYSNHGEAALAIQMANGLVVRGKPIKCSWGNKPTPPGTSSKPLPPPLPSYQPVPMAGVPQGFSAADIVAYQRQLTLSQVAAGQIAGQHGLAGQVSAGLLAAGSQALYDGYPNQSSAQQLMYYN</sequence>
<proteinExistence type="evidence at protein level"/>
<organism>
    <name type="scientific">Oryza sativa subsp. japonica</name>
    <name type="common">Rice</name>
    <dbReference type="NCBI Taxonomy" id="39947"/>
    <lineage>
        <taxon>Eukaryota</taxon>
        <taxon>Viridiplantae</taxon>
        <taxon>Streptophyta</taxon>
        <taxon>Embryophyta</taxon>
        <taxon>Tracheophyta</taxon>
        <taxon>Spermatophyta</taxon>
        <taxon>Magnoliopsida</taxon>
        <taxon>Liliopsida</taxon>
        <taxon>Poales</taxon>
        <taxon>Poaceae</taxon>
        <taxon>BOP clade</taxon>
        <taxon>Oryzoideae</taxon>
        <taxon>Oryzeae</taxon>
        <taxon>Oryzinae</taxon>
        <taxon>Oryza</taxon>
        <taxon>Oryza sativa</taxon>
    </lineage>
</organism>
<keyword id="KW-1185">Reference proteome</keyword>
<keyword id="KW-0677">Repeat</keyword>
<keyword id="KW-0694">RNA-binding</keyword>
<protein>
    <recommendedName>
        <fullName evidence="4">RNA-binding protein 208</fullName>
    </recommendedName>
</protein>
<reference key="1">
    <citation type="journal article" date="2005" name="Nature">
        <title>The map-based sequence of the rice genome.</title>
        <authorList>
            <consortium name="International rice genome sequencing project (IRGSP)"/>
        </authorList>
    </citation>
    <scope>NUCLEOTIDE SEQUENCE [LARGE SCALE GENOMIC DNA]</scope>
    <source>
        <strain>cv. Nipponbare</strain>
    </source>
</reference>
<reference key="2">
    <citation type="journal article" date="2008" name="Nucleic Acids Res.">
        <title>The rice annotation project database (RAP-DB): 2008 update.</title>
        <authorList>
            <consortium name="The rice annotation project (RAP)"/>
        </authorList>
    </citation>
    <scope>GENOME REANNOTATION</scope>
    <source>
        <strain>cv. Nipponbare</strain>
    </source>
</reference>
<reference key="3">
    <citation type="journal article" date="2013" name="Rice">
        <title>Improvement of the Oryza sativa Nipponbare reference genome using next generation sequence and optical map data.</title>
        <authorList>
            <person name="Kawahara Y."/>
            <person name="de la Bastide M."/>
            <person name="Hamilton J.P."/>
            <person name="Kanamori H."/>
            <person name="McCombie W.R."/>
            <person name="Ouyang S."/>
            <person name="Schwartz D.C."/>
            <person name="Tanaka T."/>
            <person name="Wu J."/>
            <person name="Zhou S."/>
            <person name="Childs K.L."/>
            <person name="Davidson R.M."/>
            <person name="Lin H."/>
            <person name="Quesada-Ocampo L."/>
            <person name="Vaillancourt B."/>
            <person name="Sakai H."/>
            <person name="Lee S.S."/>
            <person name="Kim J."/>
            <person name="Numa H."/>
            <person name="Itoh T."/>
            <person name="Buell C.R."/>
            <person name="Matsumoto T."/>
        </authorList>
    </citation>
    <scope>GENOME REANNOTATION</scope>
    <source>
        <strain>cv. Nipponbare</strain>
    </source>
</reference>
<reference key="4">
    <citation type="journal article" date="2005" name="PLoS Biol.">
        <title>The genomes of Oryza sativa: a history of duplications.</title>
        <authorList>
            <person name="Yu J."/>
            <person name="Wang J."/>
            <person name="Lin W."/>
            <person name="Li S."/>
            <person name="Li H."/>
            <person name="Zhou J."/>
            <person name="Ni P."/>
            <person name="Dong W."/>
            <person name="Hu S."/>
            <person name="Zeng C."/>
            <person name="Zhang J."/>
            <person name="Zhang Y."/>
            <person name="Li R."/>
            <person name="Xu Z."/>
            <person name="Li S."/>
            <person name="Li X."/>
            <person name="Zheng H."/>
            <person name="Cong L."/>
            <person name="Lin L."/>
            <person name="Yin J."/>
            <person name="Geng J."/>
            <person name="Li G."/>
            <person name="Shi J."/>
            <person name="Liu J."/>
            <person name="Lv H."/>
            <person name="Li J."/>
            <person name="Wang J."/>
            <person name="Deng Y."/>
            <person name="Ran L."/>
            <person name="Shi X."/>
            <person name="Wang X."/>
            <person name="Wu Q."/>
            <person name="Li C."/>
            <person name="Ren X."/>
            <person name="Wang J."/>
            <person name="Wang X."/>
            <person name="Li D."/>
            <person name="Liu D."/>
            <person name="Zhang X."/>
            <person name="Ji Z."/>
            <person name="Zhao W."/>
            <person name="Sun Y."/>
            <person name="Zhang Z."/>
            <person name="Bao J."/>
            <person name="Han Y."/>
            <person name="Dong L."/>
            <person name="Ji J."/>
            <person name="Chen P."/>
            <person name="Wu S."/>
            <person name="Liu J."/>
            <person name="Xiao Y."/>
            <person name="Bu D."/>
            <person name="Tan J."/>
            <person name="Yang L."/>
            <person name="Ye C."/>
            <person name="Zhang J."/>
            <person name="Xu J."/>
            <person name="Zhou Y."/>
            <person name="Yu Y."/>
            <person name="Zhang B."/>
            <person name="Zhuang S."/>
            <person name="Wei H."/>
            <person name="Liu B."/>
            <person name="Lei M."/>
            <person name="Yu H."/>
            <person name="Li Y."/>
            <person name="Xu H."/>
            <person name="Wei S."/>
            <person name="He X."/>
            <person name="Fang L."/>
            <person name="Zhang Z."/>
            <person name="Zhang Y."/>
            <person name="Huang X."/>
            <person name="Su Z."/>
            <person name="Tong W."/>
            <person name="Li J."/>
            <person name="Tong Z."/>
            <person name="Li S."/>
            <person name="Ye J."/>
            <person name="Wang L."/>
            <person name="Fang L."/>
            <person name="Lei T."/>
            <person name="Chen C.-S."/>
            <person name="Chen H.-C."/>
            <person name="Xu Z."/>
            <person name="Li H."/>
            <person name="Huang H."/>
            <person name="Zhang F."/>
            <person name="Xu H."/>
            <person name="Li N."/>
            <person name="Zhao C."/>
            <person name="Li S."/>
            <person name="Dong L."/>
            <person name="Huang Y."/>
            <person name="Li L."/>
            <person name="Xi Y."/>
            <person name="Qi Q."/>
            <person name="Li W."/>
            <person name="Zhang B."/>
            <person name="Hu W."/>
            <person name="Zhang Y."/>
            <person name="Tian X."/>
            <person name="Jiao Y."/>
            <person name="Liang X."/>
            <person name="Jin J."/>
            <person name="Gao L."/>
            <person name="Zheng W."/>
            <person name="Hao B."/>
            <person name="Liu S.-M."/>
            <person name="Wang W."/>
            <person name="Yuan L."/>
            <person name="Cao M."/>
            <person name="McDermott J."/>
            <person name="Samudrala R."/>
            <person name="Wang J."/>
            <person name="Wong G.K.-S."/>
            <person name="Yang H."/>
        </authorList>
    </citation>
    <scope>NUCLEOTIDE SEQUENCE [LARGE SCALE GENOMIC DNA]</scope>
    <source>
        <strain>cv. Nipponbare</strain>
    </source>
</reference>
<reference key="5">
    <citation type="journal article" date="2003" name="Science">
        <title>Collection, mapping, and annotation of over 28,000 cDNA clones from japonica rice.</title>
        <authorList>
            <consortium name="The rice full-length cDNA consortium"/>
        </authorList>
    </citation>
    <scope>NUCLEOTIDE SEQUENCE [LARGE SCALE MRNA]</scope>
    <source>
        <strain>cv. Nipponbare</strain>
    </source>
</reference>
<reference key="6">
    <citation type="journal article" date="2018" name="Plant Cell">
        <title>RNA-binding protein RBP-P is required for glutelin and prolamine mRNA localization in rice endosperm cells.</title>
        <authorList>
            <person name="Tian L."/>
            <person name="Chou H.L."/>
            <person name="Zhang L."/>
            <person name="Hwang S.K."/>
            <person name="Starkenburg S.R."/>
            <person name="Doroshenk K.A."/>
            <person name="Kumamaru T."/>
            <person name="Okita T.W."/>
        </authorList>
    </citation>
    <scope>INTERACTION WITH RBP-P</scope>
</reference>
<comment type="function">
    <text evidence="5">RNA-binding protein.</text>
</comment>
<comment type="subunit">
    <text evidence="3">Interacts with RBP-P.</text>
</comment>
<gene>
    <name evidence="4" type="primary">RBP-208</name>
    <name evidence="8" type="ordered locus">Os08g0520300</name>
    <name evidence="5" type="ordered locus">LOC_Os08g40880</name>
    <name evidence="7" type="ORF">OJ1003_A09.12</name>
    <name evidence="9" type="ORF">OsJ_27962</name>
    <name evidence="6" type="ORF">P0689E12.36</name>
</gene>
<feature type="chain" id="PRO_0000451592" description="RNA-binding protein 208">
    <location>
        <begin position="1"/>
        <end position="447"/>
    </location>
</feature>
<feature type="domain" description="RRM 1" evidence="1">
    <location>
        <begin position="73"/>
        <end position="147"/>
    </location>
</feature>
<feature type="domain" description="RRM 2" evidence="1">
    <location>
        <begin position="158"/>
        <end position="236"/>
    </location>
</feature>
<feature type="domain" description="RRM 3" evidence="1">
    <location>
        <begin position="282"/>
        <end position="356"/>
    </location>
</feature>
<feature type="region of interest" description="Disordered" evidence="2">
    <location>
        <begin position="254"/>
        <end position="279"/>
    </location>
</feature>
<feature type="region of interest" description="Disordered" evidence="2">
    <location>
        <begin position="353"/>
        <end position="372"/>
    </location>
</feature>
<feature type="compositionally biased region" description="Polar residues" evidence="2">
    <location>
        <begin position="254"/>
        <end position="269"/>
    </location>
</feature>
<dbReference type="EMBL" id="AP004622">
    <property type="protein sequence ID" value="BAD09702.1"/>
    <property type="molecule type" value="Genomic_DNA"/>
</dbReference>
<dbReference type="EMBL" id="AP008214">
    <property type="protein sequence ID" value="BAF24180.1"/>
    <property type="molecule type" value="Genomic_DNA"/>
</dbReference>
<dbReference type="EMBL" id="AP005509">
    <property type="protein sequence ID" value="BAD10437.1"/>
    <property type="molecule type" value="Genomic_DNA"/>
</dbReference>
<dbReference type="EMBL" id="AP014964">
    <property type="protein sequence ID" value="BAT06291.1"/>
    <property type="molecule type" value="Genomic_DNA"/>
</dbReference>
<dbReference type="EMBL" id="CM000145">
    <property type="protein sequence ID" value="EEE69011.1"/>
    <property type="molecule type" value="Genomic_DNA"/>
</dbReference>
<dbReference type="EMBL" id="AK069912">
    <property type="protein sequence ID" value="BAG91671.1"/>
    <property type="molecule type" value="mRNA"/>
</dbReference>
<dbReference type="RefSeq" id="XP_015649757.1">
    <property type="nucleotide sequence ID" value="XM_015794271.1"/>
</dbReference>
<dbReference type="SMR" id="Q6YZW2"/>
<dbReference type="FunCoup" id="Q6YZW2">
    <property type="interactions" value="1703"/>
</dbReference>
<dbReference type="STRING" id="39947.Q6YZW2"/>
<dbReference type="PaxDb" id="39947-Q6YZW2"/>
<dbReference type="EnsemblPlants" id="Os08t0520300-01">
    <property type="protein sequence ID" value="Os08t0520300-01"/>
    <property type="gene ID" value="Os08g0520300"/>
</dbReference>
<dbReference type="Gramene" id="Os08t0520300-01">
    <property type="protein sequence ID" value="Os08t0520300-01"/>
    <property type="gene ID" value="Os08g0520300"/>
</dbReference>
<dbReference type="KEGG" id="dosa:Os08g0520300"/>
<dbReference type="eggNOG" id="KOG0118">
    <property type="taxonomic scope" value="Eukaryota"/>
</dbReference>
<dbReference type="HOGENOM" id="CLU_025000_0_0_1"/>
<dbReference type="InParanoid" id="Q6YZW2"/>
<dbReference type="OMA" id="NIGHEVN"/>
<dbReference type="OrthoDB" id="8093034at2759"/>
<dbReference type="Proteomes" id="UP000000763">
    <property type="component" value="Chromosome 8"/>
</dbReference>
<dbReference type="Proteomes" id="UP000007752">
    <property type="component" value="Chromosome 8"/>
</dbReference>
<dbReference type="Proteomes" id="UP000059680">
    <property type="component" value="Chromosome 8"/>
</dbReference>
<dbReference type="GO" id="GO:0003729">
    <property type="term" value="F:mRNA binding"/>
    <property type="evidence" value="ECO:0000318"/>
    <property type="project" value="GO_Central"/>
</dbReference>
<dbReference type="CDD" id="cd12619">
    <property type="entry name" value="RRM2_PUB1"/>
    <property type="match status" value="1"/>
</dbReference>
<dbReference type="FunFam" id="3.30.70.330:FF:000301">
    <property type="entry name" value="Nucleolysin TIAR-like protein"/>
    <property type="match status" value="1"/>
</dbReference>
<dbReference type="FunFam" id="3.30.70.330:FF:000191">
    <property type="entry name" value="Oligouridylate-binding protein 1C"/>
    <property type="match status" value="1"/>
</dbReference>
<dbReference type="FunFam" id="3.30.70.330:FF:000598">
    <property type="entry name" value="Oligouridylate-binding protein 1C"/>
    <property type="match status" value="1"/>
</dbReference>
<dbReference type="Gene3D" id="3.30.70.330">
    <property type="match status" value="3"/>
</dbReference>
<dbReference type="InterPro" id="IPR012677">
    <property type="entry name" value="Nucleotide-bd_a/b_plait_sf"/>
</dbReference>
<dbReference type="InterPro" id="IPR035979">
    <property type="entry name" value="RBD_domain_sf"/>
</dbReference>
<dbReference type="InterPro" id="IPR050825">
    <property type="entry name" value="RBM42_RBP45_47-like"/>
</dbReference>
<dbReference type="InterPro" id="IPR000504">
    <property type="entry name" value="RRM_dom"/>
</dbReference>
<dbReference type="PANTHER" id="PTHR47640:SF9">
    <property type="entry name" value="POLYADENYLATE-BINDING PROTEIN RBP47B"/>
    <property type="match status" value="1"/>
</dbReference>
<dbReference type="PANTHER" id="PTHR47640">
    <property type="entry name" value="TRNA SELENOCYSTEINE 1-ASSOCIATED PROTEIN 1-RELATED-RELATED"/>
    <property type="match status" value="1"/>
</dbReference>
<dbReference type="Pfam" id="PF00076">
    <property type="entry name" value="RRM_1"/>
    <property type="match status" value="3"/>
</dbReference>
<dbReference type="SMART" id="SM00360">
    <property type="entry name" value="RRM"/>
    <property type="match status" value="3"/>
</dbReference>
<dbReference type="SUPFAM" id="SSF54928">
    <property type="entry name" value="RNA-binding domain, RBD"/>
    <property type="match status" value="2"/>
</dbReference>
<dbReference type="PROSITE" id="PS50102">
    <property type="entry name" value="RRM"/>
    <property type="match status" value="3"/>
</dbReference>
<evidence type="ECO:0000255" key="1">
    <source>
        <dbReference type="PROSITE-ProRule" id="PRU00176"/>
    </source>
</evidence>
<evidence type="ECO:0000256" key="2">
    <source>
        <dbReference type="SAM" id="MobiDB-lite"/>
    </source>
</evidence>
<evidence type="ECO:0000269" key="3">
    <source>
    </source>
</evidence>
<evidence type="ECO:0000303" key="4">
    <source>
    </source>
</evidence>
<evidence type="ECO:0000305" key="5"/>
<evidence type="ECO:0000312" key="6">
    <source>
        <dbReference type="EMBL" id="BAD09702.1"/>
    </source>
</evidence>
<evidence type="ECO:0000312" key="7">
    <source>
        <dbReference type="EMBL" id="BAD10437.1"/>
    </source>
</evidence>
<evidence type="ECO:0000312" key="8">
    <source>
        <dbReference type="EMBL" id="BAT06291.1"/>
    </source>
</evidence>
<evidence type="ECO:0000312" key="9">
    <source>
        <dbReference type="EMBL" id="EEE69011.1"/>
    </source>
</evidence>